<proteinExistence type="evidence at protein level"/>
<protein>
    <recommendedName>
        <fullName evidence="4">Extended FMRFamide-7</fullName>
        <shortName evidence="4">FMRFa-7</shortName>
    </recommendedName>
</protein>
<reference evidence="5" key="1">
    <citation type="journal article" date="2012" name="Syst. Biol.">
        <title>Peptidomics-based phylogeny and biogeography of Mantophasmatodea (Hexapoda).</title>
        <authorList>
            <person name="Predel R."/>
            <person name="Neupert S."/>
            <person name="Huetteroth W."/>
            <person name="Kahnt J."/>
            <person name="Waidelich D."/>
            <person name="Roth S."/>
        </authorList>
    </citation>
    <scope>PROTEIN SEQUENCE</scope>
    <scope>AMIDATION AT LEU-9</scope>
    <source>
        <tissue evidence="3">Thoracic perisympathetic organs</tissue>
    </source>
</reference>
<organism>
    <name type="scientific">Karoophasma botterkloofense</name>
    <name type="common">Gladiator</name>
    <name type="synonym">Heel-walker</name>
    <dbReference type="NCBI Taxonomy" id="253132"/>
    <lineage>
        <taxon>Eukaryota</taxon>
        <taxon>Metazoa</taxon>
        <taxon>Ecdysozoa</taxon>
        <taxon>Arthropoda</taxon>
        <taxon>Hexapoda</taxon>
        <taxon>Insecta</taxon>
        <taxon>Pterygota</taxon>
        <taxon>Neoptera</taxon>
        <taxon>Polyneoptera</taxon>
        <taxon>Mantophasmatodea</taxon>
        <taxon>Austrophasmatidae</taxon>
        <taxon>Karoophasma</taxon>
    </lineage>
</organism>
<evidence type="ECO:0000250" key="1">
    <source>
        <dbReference type="UniProtKB" id="P34405"/>
    </source>
</evidence>
<evidence type="ECO:0000255" key="2"/>
<evidence type="ECO:0000269" key="3">
    <source>
    </source>
</evidence>
<evidence type="ECO:0000303" key="4">
    <source>
    </source>
</evidence>
<evidence type="ECO:0000305" key="5"/>
<evidence type="ECO:0000305" key="6">
    <source>
    </source>
</evidence>
<feature type="peptide" id="PRO_0000421524" description="Extended FMRFamide-7" evidence="3">
    <location>
        <begin position="1"/>
        <end position="9"/>
    </location>
</feature>
<feature type="modified residue" description="Leucine amide" evidence="3">
    <location>
        <position position="9"/>
    </location>
</feature>
<feature type="unsure residue" description="L or I" evidence="3">
    <location>
        <position position="9"/>
    </location>
</feature>
<keyword id="KW-0027">Amidation</keyword>
<keyword id="KW-0903">Direct protein sequencing</keyword>
<keyword id="KW-0527">Neuropeptide</keyword>
<keyword id="KW-0964">Secreted</keyword>
<comment type="function">
    <text evidence="1">FMRFamides and FMRFamide-like peptides are neuropeptides.</text>
</comment>
<comment type="subcellular location">
    <subcellularLocation>
        <location evidence="6">Secreted</location>
    </subcellularLocation>
</comment>
<comment type="similarity">
    <text evidence="2">Belongs to the FARP (FMRF amide related peptide) family.</text>
</comment>
<dbReference type="GO" id="GO:0005576">
    <property type="term" value="C:extracellular region"/>
    <property type="evidence" value="ECO:0007669"/>
    <property type="project" value="UniProtKB-SubCell"/>
</dbReference>
<dbReference type="GO" id="GO:0007218">
    <property type="term" value="P:neuropeptide signaling pathway"/>
    <property type="evidence" value="ECO:0007669"/>
    <property type="project" value="UniProtKB-KW"/>
</dbReference>
<accession>B0M8U5</accession>
<sequence>ARSDNFVRL</sequence>
<name>FAR7_KARBO</name>